<accession>Q7XXI9</accession>
<evidence type="ECO:0000250" key="1">
    <source>
        <dbReference type="UniProtKB" id="F1DBB3"/>
    </source>
</evidence>
<evidence type="ECO:0000250" key="2">
    <source>
        <dbReference type="UniProtKB" id="P28002"/>
    </source>
</evidence>
<evidence type="ECO:0000255" key="3">
    <source>
        <dbReference type="PROSITE-ProRule" id="PRU01020"/>
    </source>
</evidence>
<evidence type="ECO:0000269" key="4">
    <source>
    </source>
</evidence>
<evidence type="ECO:0000305" key="5"/>
<evidence type="ECO:0000312" key="6">
    <source>
        <dbReference type="EMBL" id="BAF13918.1"/>
    </source>
</evidence>
<evidence type="ECO:0000312" key="7">
    <source>
        <dbReference type="EMBL" id="CAD39344.2"/>
    </source>
</evidence>
<organism>
    <name type="scientific">Oryza sativa subsp. japonica</name>
    <name type="common">Rice</name>
    <dbReference type="NCBI Taxonomy" id="39947"/>
    <lineage>
        <taxon>Eukaryota</taxon>
        <taxon>Viridiplantae</taxon>
        <taxon>Streptophyta</taxon>
        <taxon>Embryophyta</taxon>
        <taxon>Tracheophyta</taxon>
        <taxon>Spermatophyta</taxon>
        <taxon>Magnoliopsida</taxon>
        <taxon>Liliopsida</taxon>
        <taxon>Poales</taxon>
        <taxon>Poaceae</taxon>
        <taxon>BOP clade</taxon>
        <taxon>Oryzoideae</taxon>
        <taxon>Oryzeae</taxon>
        <taxon>Oryzinae</taxon>
        <taxon>Oryza</taxon>
        <taxon>Oryza sativa</taxon>
    </lineage>
</organism>
<feature type="chain" id="PRO_0000437950" description="Caffeate O-methyltransferase-like protein 2">
    <location>
        <begin position="1"/>
        <end position="354"/>
    </location>
</feature>
<feature type="active site" description="Proton acceptor" evidence="3">
    <location>
        <position position="259"/>
    </location>
</feature>
<feature type="active site" evidence="1">
    <location>
        <position position="287"/>
    </location>
</feature>
<feature type="active site" evidence="1">
    <location>
        <position position="319"/>
    </location>
</feature>
<feature type="binding site" evidence="2">
    <location>
        <position position="198"/>
    </location>
    <ligand>
        <name>S-adenosyl-L-homocysteine</name>
        <dbReference type="ChEBI" id="CHEBI:57856"/>
    </ligand>
</feature>
<feature type="binding site" evidence="2">
    <location>
        <position position="221"/>
    </location>
    <ligand>
        <name>S-adenosyl-L-homocysteine</name>
        <dbReference type="ChEBI" id="CHEBI:57856"/>
    </ligand>
</feature>
<feature type="binding site" evidence="2">
    <location>
        <position position="242"/>
    </location>
    <ligand>
        <name>S-adenosyl-L-homocysteine</name>
        <dbReference type="ChEBI" id="CHEBI:57856"/>
    </ligand>
</feature>
<feature type="binding site" evidence="2">
    <location>
        <position position="255"/>
    </location>
    <ligand>
        <name>S-adenosyl-L-homocysteine</name>
        <dbReference type="ChEBI" id="CHEBI:57856"/>
    </ligand>
</feature>
<protein>
    <recommendedName>
        <fullName evidence="5">Caffeate O-methyltransferase-like protein 2</fullName>
        <shortName evidence="5">OsCOMTL2</shortName>
        <ecNumber evidence="5">2.1.1.-</ecNumber>
    </recommendedName>
</protein>
<gene>
    <name evidence="5" type="primary">COMTL2</name>
    <name evidence="6" type="ordered locus">Os04g0104900</name>
    <name evidence="5" type="ordered locus">LOC_Os04g01470</name>
    <name evidence="7" type="ORF">OSJNBa0094O15.13</name>
</gene>
<proteinExistence type="evidence at transcript level"/>
<reference key="1">
    <citation type="journal article" date="2002" name="Nature">
        <title>Sequence and analysis of rice chromosome 4.</title>
        <authorList>
            <person name="Feng Q."/>
            <person name="Zhang Y."/>
            <person name="Hao P."/>
            <person name="Wang S."/>
            <person name="Fu G."/>
            <person name="Huang Y."/>
            <person name="Li Y."/>
            <person name="Zhu J."/>
            <person name="Liu Y."/>
            <person name="Hu X."/>
            <person name="Jia P."/>
            <person name="Zhang Y."/>
            <person name="Zhao Q."/>
            <person name="Ying K."/>
            <person name="Yu S."/>
            <person name="Tang Y."/>
            <person name="Weng Q."/>
            <person name="Zhang L."/>
            <person name="Lu Y."/>
            <person name="Mu J."/>
            <person name="Lu Y."/>
            <person name="Zhang L.S."/>
            <person name="Yu Z."/>
            <person name="Fan D."/>
            <person name="Liu X."/>
            <person name="Lu T."/>
            <person name="Li C."/>
            <person name="Wu Y."/>
            <person name="Sun T."/>
            <person name="Lei H."/>
            <person name="Li T."/>
            <person name="Hu H."/>
            <person name="Guan J."/>
            <person name="Wu M."/>
            <person name="Zhang R."/>
            <person name="Zhou B."/>
            <person name="Chen Z."/>
            <person name="Chen L."/>
            <person name="Jin Z."/>
            <person name="Wang R."/>
            <person name="Yin H."/>
            <person name="Cai Z."/>
            <person name="Ren S."/>
            <person name="Lv G."/>
            <person name="Gu W."/>
            <person name="Zhu G."/>
            <person name="Tu Y."/>
            <person name="Jia J."/>
            <person name="Zhang Y."/>
            <person name="Chen J."/>
            <person name="Kang H."/>
            <person name="Chen X."/>
            <person name="Shao C."/>
            <person name="Sun Y."/>
            <person name="Hu Q."/>
            <person name="Zhang X."/>
            <person name="Zhang W."/>
            <person name="Wang L."/>
            <person name="Ding C."/>
            <person name="Sheng H."/>
            <person name="Gu J."/>
            <person name="Chen S."/>
            <person name="Ni L."/>
            <person name="Zhu F."/>
            <person name="Chen W."/>
            <person name="Lan L."/>
            <person name="Lai Y."/>
            <person name="Cheng Z."/>
            <person name="Gu M."/>
            <person name="Jiang J."/>
            <person name="Li J."/>
            <person name="Hong G."/>
            <person name="Xue Y."/>
            <person name="Han B."/>
        </authorList>
    </citation>
    <scope>NUCLEOTIDE SEQUENCE [LARGE SCALE GENOMIC DNA]</scope>
    <source>
        <strain>cv. Nipponbare</strain>
    </source>
</reference>
<reference key="2">
    <citation type="journal article" date="2005" name="Nature">
        <title>The map-based sequence of the rice genome.</title>
        <authorList>
            <consortium name="International rice genome sequencing project (IRGSP)"/>
        </authorList>
    </citation>
    <scope>NUCLEOTIDE SEQUENCE [LARGE SCALE GENOMIC DNA]</scope>
    <source>
        <strain>cv. Nipponbare</strain>
    </source>
</reference>
<reference key="3">
    <citation type="journal article" date="2008" name="Nucleic Acids Res.">
        <title>The rice annotation project database (RAP-DB): 2008 update.</title>
        <authorList>
            <consortium name="The rice annotation project (RAP)"/>
        </authorList>
    </citation>
    <scope>GENOME REANNOTATION</scope>
    <source>
        <strain>cv. Nipponbare</strain>
    </source>
</reference>
<reference key="4">
    <citation type="journal article" date="2013" name="Rice">
        <title>Improvement of the Oryza sativa Nipponbare reference genome using next generation sequence and optical map data.</title>
        <authorList>
            <person name="Kawahara Y."/>
            <person name="de la Bastide M."/>
            <person name="Hamilton J.P."/>
            <person name="Kanamori H."/>
            <person name="McCombie W.R."/>
            <person name="Ouyang S."/>
            <person name="Schwartz D.C."/>
            <person name="Tanaka T."/>
            <person name="Wu J."/>
            <person name="Zhou S."/>
            <person name="Childs K.L."/>
            <person name="Davidson R.M."/>
            <person name="Lin H."/>
            <person name="Quesada-Ocampo L."/>
            <person name="Vaillancourt B."/>
            <person name="Sakai H."/>
            <person name="Lee S.S."/>
            <person name="Kim J."/>
            <person name="Numa H."/>
            <person name="Itoh T."/>
            <person name="Buell C.R."/>
            <person name="Matsumoto T."/>
        </authorList>
    </citation>
    <scope>GENOME REANNOTATION</scope>
    <source>
        <strain>cv. Nipponbare</strain>
    </source>
</reference>
<reference key="5">
    <citation type="journal article" date="2013" name="Phytochemistry">
        <title>Transcriptomic analysis of UV-treated rice leaves reveals UV-induced phytoalexin biosynthetic pathways and their regulatory networks in rice.</title>
        <authorList>
            <person name="Park H.L."/>
            <person name="Lee S.W."/>
            <person name="Jung K.H."/>
            <person name="Hahn T.R."/>
            <person name="Cho M.H."/>
        </authorList>
    </citation>
    <scope>INDUCTION BY UV-C</scope>
</reference>
<sequence length="354" mass="38376">MTPAADGDDDETTCIRALELIFTFVVPMTLKATIKLGLLDALTGGGHALTADELAAAAQLPAEAASSVDRMLRLLASLDVVKCAPTDTGGEAAVRRYTPAPVCRWFAGERSLAPLAMFLLDDDYLSTWNQLPAAVAGGDGQVAFEKARGMPMFEYMGTNRRLNTLFNQAMVQQSTVVIGKLLERFQGFDGVSVLVDVGGGTGATLEMITSRYKNITGVNFDLPHVIAQAPSLPGVKHIAGNMFESVPNGDAIFLKSMLHLHNDEDCIKILKKCHQALTHNGKVIAVEILLPAIPEPVPTAQNPFRMDMIMLNNHWGGKERTEPEFAKLAVECGYTGVFQATYIFANYWALEFSK</sequence>
<name>OMTL2_ORYSJ</name>
<keyword id="KW-0489">Methyltransferase</keyword>
<keyword id="KW-1185">Reference proteome</keyword>
<keyword id="KW-0949">S-adenosyl-L-methionine</keyword>
<keyword id="KW-0808">Transferase</keyword>
<comment type="induction">
    <text evidence="4">Induced by UV-C.</text>
</comment>
<comment type="similarity">
    <text evidence="5">Belongs to the class I-like SAM-binding methyltransferase superfamily. Cation-independent O-methyltransferase family. COMT subfamily.</text>
</comment>
<dbReference type="EC" id="2.1.1.-" evidence="5"/>
<dbReference type="EMBL" id="AL662935">
    <property type="protein sequence ID" value="CAD39344.2"/>
    <property type="molecule type" value="Genomic_DNA"/>
</dbReference>
<dbReference type="EMBL" id="AP008210">
    <property type="protein sequence ID" value="BAF13918.1"/>
    <property type="molecule type" value="Genomic_DNA"/>
</dbReference>
<dbReference type="EMBL" id="AP014960">
    <property type="protein sequence ID" value="BAS87525.1"/>
    <property type="molecule type" value="Genomic_DNA"/>
</dbReference>
<dbReference type="SMR" id="Q7XXI9"/>
<dbReference type="FunCoup" id="Q7XXI9">
    <property type="interactions" value="49"/>
</dbReference>
<dbReference type="STRING" id="39947.Q7XXI9"/>
<dbReference type="PaxDb" id="39947-Q7XXI9"/>
<dbReference type="EnsemblPlants" id="Os04t0104900-01">
    <property type="protein sequence ID" value="Os04t0104900-01"/>
    <property type="gene ID" value="Os04g0104900"/>
</dbReference>
<dbReference type="Gramene" id="Os04t0104900-01">
    <property type="protein sequence ID" value="Os04t0104900-01"/>
    <property type="gene ID" value="Os04g0104900"/>
</dbReference>
<dbReference type="KEGG" id="dosa:Os04g0104900"/>
<dbReference type="eggNOG" id="KOG3178">
    <property type="taxonomic scope" value="Eukaryota"/>
</dbReference>
<dbReference type="HOGENOM" id="CLU_005533_12_1_1"/>
<dbReference type="InParanoid" id="Q7XXI9"/>
<dbReference type="OMA" id="PFRMDMI"/>
<dbReference type="Proteomes" id="UP000000763">
    <property type="component" value="Chromosome 4"/>
</dbReference>
<dbReference type="Proteomes" id="UP000059680">
    <property type="component" value="Chromosome 4"/>
</dbReference>
<dbReference type="GO" id="GO:0008171">
    <property type="term" value="F:O-methyltransferase activity"/>
    <property type="evidence" value="ECO:0000318"/>
    <property type="project" value="GO_Central"/>
</dbReference>
<dbReference type="GO" id="GO:0046983">
    <property type="term" value="F:protein dimerization activity"/>
    <property type="evidence" value="ECO:0007669"/>
    <property type="project" value="InterPro"/>
</dbReference>
<dbReference type="GO" id="GO:0008757">
    <property type="term" value="F:S-adenosylmethionine-dependent methyltransferase activity"/>
    <property type="evidence" value="ECO:0000318"/>
    <property type="project" value="GO_Central"/>
</dbReference>
<dbReference type="GO" id="GO:0009058">
    <property type="term" value="P:biosynthetic process"/>
    <property type="evidence" value="ECO:0000318"/>
    <property type="project" value="GO_Central"/>
</dbReference>
<dbReference type="GO" id="GO:0032259">
    <property type="term" value="P:methylation"/>
    <property type="evidence" value="ECO:0000318"/>
    <property type="project" value="GO_Central"/>
</dbReference>
<dbReference type="CDD" id="cd02440">
    <property type="entry name" value="AdoMet_MTases"/>
    <property type="match status" value="1"/>
</dbReference>
<dbReference type="FunFam" id="3.40.50.150:FF:000061">
    <property type="entry name" value="Caffeic acid O-methyltransferase"/>
    <property type="match status" value="1"/>
</dbReference>
<dbReference type="Gene3D" id="3.40.50.150">
    <property type="entry name" value="Vaccinia Virus protein VP39"/>
    <property type="match status" value="1"/>
</dbReference>
<dbReference type="Gene3D" id="1.10.10.10">
    <property type="entry name" value="Winged helix-like DNA-binding domain superfamily/Winged helix DNA-binding domain"/>
    <property type="match status" value="1"/>
</dbReference>
<dbReference type="InterPro" id="IPR016461">
    <property type="entry name" value="COMT-like"/>
</dbReference>
<dbReference type="InterPro" id="IPR001077">
    <property type="entry name" value="O_MeTrfase_dom"/>
</dbReference>
<dbReference type="InterPro" id="IPR012967">
    <property type="entry name" value="Plant_O-MeTrfase_dimerisation"/>
</dbReference>
<dbReference type="InterPro" id="IPR029063">
    <property type="entry name" value="SAM-dependent_MTases_sf"/>
</dbReference>
<dbReference type="InterPro" id="IPR036388">
    <property type="entry name" value="WH-like_DNA-bd_sf"/>
</dbReference>
<dbReference type="InterPro" id="IPR036390">
    <property type="entry name" value="WH_DNA-bd_sf"/>
</dbReference>
<dbReference type="PANTHER" id="PTHR11746">
    <property type="entry name" value="O-METHYLTRANSFERASE"/>
    <property type="match status" value="1"/>
</dbReference>
<dbReference type="Pfam" id="PF08100">
    <property type="entry name" value="Dimerisation"/>
    <property type="match status" value="1"/>
</dbReference>
<dbReference type="Pfam" id="PF00891">
    <property type="entry name" value="Methyltransf_2"/>
    <property type="match status" value="1"/>
</dbReference>
<dbReference type="PIRSF" id="PIRSF005739">
    <property type="entry name" value="O-mtase"/>
    <property type="match status" value="1"/>
</dbReference>
<dbReference type="SUPFAM" id="SSF53335">
    <property type="entry name" value="S-adenosyl-L-methionine-dependent methyltransferases"/>
    <property type="match status" value="1"/>
</dbReference>
<dbReference type="SUPFAM" id="SSF46785">
    <property type="entry name" value="Winged helix' DNA-binding domain"/>
    <property type="match status" value="1"/>
</dbReference>
<dbReference type="PROSITE" id="PS51683">
    <property type="entry name" value="SAM_OMT_II"/>
    <property type="match status" value="1"/>
</dbReference>